<evidence type="ECO:0000255" key="1">
    <source>
        <dbReference type="HAMAP-Rule" id="MF_00458"/>
    </source>
</evidence>
<evidence type="ECO:0000305" key="2"/>
<evidence type="ECO:0007829" key="3">
    <source>
        <dbReference type="PDB" id="2O01"/>
    </source>
</evidence>
<evidence type="ECO:0007829" key="4">
    <source>
        <dbReference type="PDB" id="2WSC"/>
    </source>
</evidence>
<evidence type="ECO:0007829" key="5">
    <source>
        <dbReference type="PDB" id="3LW5"/>
    </source>
</evidence>
<evidence type="ECO:0007829" key="6">
    <source>
        <dbReference type="PDB" id="4RKU"/>
    </source>
</evidence>
<evidence type="ECO:0007829" key="7">
    <source>
        <dbReference type="PDB" id="4Y28"/>
    </source>
</evidence>
<evidence type="ECO:0007829" key="8">
    <source>
        <dbReference type="PDB" id="5L8R"/>
    </source>
</evidence>
<evidence type="ECO:0007829" key="9">
    <source>
        <dbReference type="PDB" id="7DKZ"/>
    </source>
</evidence>
<comment type="function">
    <text>PsaA and PsaB bind P700, the primary electron donor of photosystem I (PSI), as well as the electron acceptors A0, A1 and FX. PSI is a plastocyanin-ferredoxin oxidoreductase, converting photonic excitation into a charge separation, which transfers an electron from the donor P700 chlorophyll pair to the spectroscopically characterized acceptors A0, A1, FX, FA and FB in turn. Oxidized P700 is reduced on the lumenal side of the thylakoid membrane by plastocyanin.</text>
</comment>
<comment type="catalytic activity">
    <reaction evidence="1">
        <text>reduced [plastocyanin] + hnu + oxidized [2Fe-2S]-[ferredoxin] = oxidized [plastocyanin] + reduced [2Fe-2S]-[ferredoxin]</text>
        <dbReference type="Rhea" id="RHEA:30407"/>
        <dbReference type="Rhea" id="RHEA-COMP:10000"/>
        <dbReference type="Rhea" id="RHEA-COMP:10001"/>
        <dbReference type="Rhea" id="RHEA-COMP:10039"/>
        <dbReference type="Rhea" id="RHEA-COMP:10040"/>
        <dbReference type="ChEBI" id="CHEBI:29036"/>
        <dbReference type="ChEBI" id="CHEBI:30212"/>
        <dbReference type="ChEBI" id="CHEBI:33737"/>
        <dbReference type="ChEBI" id="CHEBI:33738"/>
        <dbReference type="ChEBI" id="CHEBI:49552"/>
        <dbReference type="EC" id="1.97.1.12"/>
    </reaction>
</comment>
<comment type="cofactor">
    <text evidence="1">P700 is a chlorophyll a/chlorophyll a' dimer, A0 is one or more chlorophyll a, A1 is one or both phylloquinones and FX is a shared 4Fe-4S iron-sulfur center.</text>
</comment>
<comment type="subunit">
    <text evidence="1">The PsaA/B heterodimer binds the P700 chlorophyll special pair and subsequent electron acceptors. PSI consists of a core antenna complex that captures photons, and an electron transfer chain that converts photonic excitation into a charge separation. The eukaryotic PSI reaction center is composed of at least 11 subunits.</text>
</comment>
<comment type="subcellular location">
    <subcellularLocation>
        <location evidence="1">Plastid</location>
        <location evidence="1">Chloroplast thylakoid membrane</location>
        <topology evidence="1">Multi-pass membrane protein</topology>
    </subcellularLocation>
</comment>
<comment type="similarity">
    <text evidence="1">Belongs to the PsaA/PsaB family.</text>
</comment>
<feature type="chain" id="PRO_0000088568" description="Photosystem I P700 chlorophyll a apoprotein A1">
    <location>
        <begin position="1"/>
        <end position="758"/>
    </location>
</feature>
<feature type="transmembrane region" description="Helical; Name=I" evidence="1">
    <location>
        <begin position="78"/>
        <end position="101"/>
    </location>
</feature>
<feature type="transmembrane region" description="Helical; Name=II" evidence="1">
    <location>
        <begin position="164"/>
        <end position="187"/>
    </location>
</feature>
<feature type="transmembrane region" description="Helical; Name=III" evidence="1">
    <location>
        <begin position="203"/>
        <end position="227"/>
    </location>
</feature>
<feature type="transmembrane region" description="Helical; Name=IV" evidence="1">
    <location>
        <begin position="299"/>
        <end position="317"/>
    </location>
</feature>
<feature type="transmembrane region" description="Helical; Name=V" evidence="1">
    <location>
        <begin position="354"/>
        <end position="377"/>
    </location>
</feature>
<feature type="transmembrane region" description="Helical; Name=VI" evidence="1">
    <location>
        <begin position="393"/>
        <end position="419"/>
    </location>
</feature>
<feature type="transmembrane region" description="Helical; Name=VII" evidence="1">
    <location>
        <begin position="441"/>
        <end position="463"/>
    </location>
</feature>
<feature type="transmembrane region" description="Helical; Name=VIII" evidence="1">
    <location>
        <begin position="539"/>
        <end position="557"/>
    </location>
</feature>
<feature type="transmembrane region" description="Helical; Name=IX" evidence="1">
    <location>
        <begin position="597"/>
        <end position="618"/>
    </location>
</feature>
<feature type="transmembrane region" description="Helical; Name=X" evidence="1">
    <location>
        <begin position="672"/>
        <end position="694"/>
    </location>
</feature>
<feature type="transmembrane region" description="Helical; Name=XI" evidence="1">
    <location>
        <begin position="732"/>
        <end position="753"/>
    </location>
</feature>
<feature type="binding site" evidence="1">
    <location>
        <position position="581"/>
    </location>
    <ligand>
        <name>[4Fe-4S] cluster</name>
        <dbReference type="ChEBI" id="CHEBI:49883"/>
        <note>ligand shared between dimeric partners</note>
    </ligand>
</feature>
<feature type="binding site" evidence="1">
    <location>
        <position position="590"/>
    </location>
    <ligand>
        <name>[4Fe-4S] cluster</name>
        <dbReference type="ChEBI" id="CHEBI:49883"/>
        <note>ligand shared between dimeric partners</note>
    </ligand>
</feature>
<feature type="binding site" description="axial binding residue" evidence="1">
    <location>
        <position position="683"/>
    </location>
    <ligand>
        <name>chlorophyll a'</name>
        <dbReference type="ChEBI" id="CHEBI:189419"/>
        <label>A1</label>
    </ligand>
    <ligandPart>
        <name>Mg</name>
        <dbReference type="ChEBI" id="CHEBI:25107"/>
    </ligandPart>
</feature>
<feature type="binding site" description="axial binding residue" evidence="1">
    <location>
        <position position="691"/>
    </location>
    <ligand>
        <name>chlorophyll a</name>
        <dbReference type="ChEBI" id="CHEBI:58416"/>
        <label>A3</label>
    </ligand>
    <ligandPart>
        <name>Mg</name>
        <dbReference type="ChEBI" id="CHEBI:25107"/>
    </ligandPart>
</feature>
<feature type="binding site" evidence="1">
    <location>
        <position position="699"/>
    </location>
    <ligand>
        <name>chlorophyll a</name>
        <dbReference type="ChEBI" id="CHEBI:58416"/>
        <label>A3</label>
    </ligand>
</feature>
<feature type="binding site" evidence="1">
    <location>
        <position position="700"/>
    </location>
    <ligand>
        <name>phylloquinone</name>
        <dbReference type="ChEBI" id="CHEBI:18067"/>
        <label>A</label>
    </ligand>
</feature>
<feature type="sequence conflict" description="In Ref. 1; CAA29003." evidence="2" ref="1">
    <original>G</original>
    <variation>R</variation>
    <location>
        <position position="117"/>
    </location>
</feature>
<feature type="sequence conflict" description="In Ref. 1; CAA29003." evidence="2" ref="1">
    <original>G</original>
    <variation>A</variation>
    <location>
        <position position="176"/>
    </location>
</feature>
<feature type="sequence conflict" description="In Ref. 1; CAA29003." evidence="2" ref="1">
    <original>A</original>
    <variation>V</variation>
    <location>
        <position position="194"/>
    </location>
</feature>
<feature type="sequence conflict" description="In Ref. 1; CAA29003." evidence="2" ref="1">
    <original>R</original>
    <variation>G</variation>
    <location>
        <position position="220"/>
    </location>
</feature>
<feature type="sequence conflict" description="In Ref. 1." evidence="2" ref="1">
    <location>
        <begin position="239"/>
        <end position="253"/>
    </location>
</feature>
<feature type="sequence conflict" description="In Ref. 1." evidence="2" ref="1">
    <original>G</original>
    <variation>GPFTGQGHKGPFTGQGHKG</variation>
    <location>
        <position position="345"/>
    </location>
</feature>
<feature type="sequence conflict" description="In Ref. 1; CAA29003." evidence="2" ref="1">
    <original>VVAQHMYS</original>
    <variation>IAAHHMIA</variation>
    <location>
        <begin position="371"/>
        <end position="378"/>
    </location>
</feature>
<feature type="sequence conflict" description="In Ref. 1; CAA29003." evidence="2" ref="1">
    <original>Y</original>
    <variation>I</variation>
    <location>
        <position position="382"/>
    </location>
</feature>
<feature type="sequence conflict" description="In Ref. 1; CAA29003." evidence="2" ref="1">
    <original>A</original>
    <variation>G</variation>
    <location>
        <position position="390"/>
    </location>
</feature>
<feature type="sequence conflict" description="In Ref. 1; CAA29003." evidence="2" ref="1">
    <original>A</original>
    <variation>T</variation>
    <location>
        <position position="509"/>
    </location>
</feature>
<feature type="sequence conflict" description="In Ref. 1; CAA29003." evidence="2" ref="1">
    <original>T</original>
    <variation>I</variation>
    <location>
        <position position="514"/>
    </location>
</feature>
<feature type="sequence conflict" description="In Ref. 1; CAA29003." evidence="2" ref="1">
    <original>A</original>
    <variation>S</variation>
    <location>
        <position position="522"/>
    </location>
</feature>
<feature type="sequence conflict" description="In Ref. 1; CAA29003." evidence="2" ref="1">
    <original>N</original>
    <variation>G</variation>
    <location>
        <position position="525"/>
    </location>
</feature>
<feature type="sequence conflict" description="In Ref. 1; CAA29003." evidence="2" ref="1">
    <original>D</original>
    <variation>V</variation>
    <location>
        <position position="596"/>
    </location>
</feature>
<feature type="sequence conflict" description="In Ref. 1; CAA29003." evidence="2" ref="1">
    <original>S</original>
    <variation>A</variation>
    <location>
        <position position="608"/>
    </location>
</feature>
<feature type="sequence conflict" description="In Ref. 1; CAA29003." evidence="2" ref="1">
    <original>T</original>
    <variation>S</variation>
    <location>
        <position position="627"/>
    </location>
</feature>
<feature type="sequence conflict" description="In Ref. 1; CAA29003." evidence="2" ref="1">
    <original>AGN</original>
    <variation>GGR</variation>
    <location>
        <begin position="639"/>
        <end position="641"/>
    </location>
</feature>
<feature type="strand" evidence="9">
    <location>
        <begin position="22"/>
        <end position="25"/>
    </location>
</feature>
<feature type="strand" evidence="4">
    <location>
        <begin position="26"/>
        <end position="28"/>
    </location>
</feature>
<feature type="turn" evidence="9">
    <location>
        <begin position="31"/>
        <end position="35"/>
    </location>
</feature>
<feature type="turn" evidence="9">
    <location>
        <begin position="37"/>
        <end position="40"/>
    </location>
</feature>
<feature type="helix" evidence="9">
    <location>
        <begin position="42"/>
        <end position="45"/>
    </location>
</feature>
<feature type="helix" evidence="9">
    <location>
        <begin position="52"/>
        <end position="59"/>
    </location>
</feature>
<feature type="turn" evidence="9">
    <location>
        <begin position="60"/>
        <end position="62"/>
    </location>
</feature>
<feature type="helix" evidence="9">
    <location>
        <begin position="64"/>
        <end position="67"/>
    </location>
</feature>
<feature type="helix" evidence="9">
    <location>
        <begin position="71"/>
        <end position="102"/>
    </location>
</feature>
<feature type="helix" evidence="9">
    <location>
        <begin position="106"/>
        <end position="111"/>
    </location>
</feature>
<feature type="turn" evidence="9">
    <location>
        <begin position="113"/>
        <end position="115"/>
    </location>
</feature>
<feature type="strand" evidence="9">
    <location>
        <begin position="119"/>
        <end position="121"/>
    </location>
</feature>
<feature type="strand" evidence="8">
    <location>
        <begin position="125"/>
        <end position="128"/>
    </location>
</feature>
<feature type="helix" evidence="9">
    <location>
        <begin position="129"/>
        <end position="132"/>
    </location>
</feature>
<feature type="strand" evidence="9">
    <location>
        <begin position="133"/>
        <end position="137"/>
    </location>
</feature>
<feature type="strand" evidence="9">
    <location>
        <begin position="140"/>
        <end position="144"/>
    </location>
</feature>
<feature type="helix" evidence="9">
    <location>
        <begin position="149"/>
        <end position="155"/>
    </location>
</feature>
<feature type="helix" evidence="9">
    <location>
        <begin position="161"/>
        <end position="187"/>
    </location>
</feature>
<feature type="strand" evidence="9">
    <location>
        <begin position="189"/>
        <end position="191"/>
    </location>
</feature>
<feature type="helix" evidence="9">
    <location>
        <begin position="193"/>
        <end position="197"/>
    </location>
</feature>
<feature type="helix" evidence="9">
    <location>
        <begin position="199"/>
        <end position="207"/>
    </location>
</feature>
<feature type="helix" evidence="9">
    <location>
        <begin position="210"/>
        <end position="224"/>
    </location>
</feature>
<feature type="helix" evidence="9">
    <location>
        <begin position="226"/>
        <end position="235"/>
    </location>
</feature>
<feature type="helix" evidence="9">
    <location>
        <begin position="239"/>
        <end position="241"/>
    </location>
</feature>
<feature type="helix" evidence="9">
    <location>
        <begin position="247"/>
        <end position="250"/>
    </location>
</feature>
<feature type="helix" evidence="9">
    <location>
        <begin position="252"/>
        <end position="258"/>
    </location>
</feature>
<feature type="helix" evidence="9">
    <location>
        <begin position="260"/>
        <end position="264"/>
    </location>
</feature>
<feature type="helix" evidence="9">
    <location>
        <begin position="267"/>
        <end position="270"/>
    </location>
</feature>
<feature type="helix" evidence="9">
    <location>
        <begin position="274"/>
        <end position="277"/>
    </location>
</feature>
<feature type="turn" evidence="9">
    <location>
        <begin position="278"/>
        <end position="280"/>
    </location>
</feature>
<feature type="turn" evidence="9">
    <location>
        <begin position="289"/>
        <end position="291"/>
    </location>
</feature>
<feature type="strand" evidence="9">
    <location>
        <begin position="292"/>
        <end position="294"/>
    </location>
</feature>
<feature type="helix" evidence="9">
    <location>
        <begin position="296"/>
        <end position="313"/>
    </location>
</feature>
<feature type="strand" evidence="9">
    <location>
        <begin position="320"/>
        <end position="325"/>
    </location>
</feature>
<feature type="helix" evidence="9">
    <location>
        <begin position="327"/>
        <end position="332"/>
    </location>
</feature>
<feature type="turn" evidence="9">
    <location>
        <begin position="337"/>
        <end position="345"/>
    </location>
</feature>
<feature type="helix" evidence="9">
    <location>
        <begin position="346"/>
        <end position="349"/>
    </location>
</feature>
<feature type="turn" evidence="9">
    <location>
        <begin position="350"/>
        <end position="352"/>
    </location>
</feature>
<feature type="helix" evidence="9">
    <location>
        <begin position="354"/>
        <end position="378"/>
    </location>
</feature>
<feature type="turn" evidence="9">
    <location>
        <begin position="383"/>
        <end position="387"/>
    </location>
</feature>
<feature type="helix" evidence="9">
    <location>
        <begin position="389"/>
        <end position="420"/>
    </location>
</feature>
<feature type="turn" evidence="9">
    <location>
        <begin position="424"/>
        <end position="426"/>
    </location>
</feature>
<feature type="helix" evidence="9">
    <location>
        <begin position="430"/>
        <end position="436"/>
    </location>
</feature>
<feature type="helix" evidence="9">
    <location>
        <begin position="439"/>
        <end position="455"/>
    </location>
</feature>
<feature type="helix" evidence="9">
    <location>
        <begin position="458"/>
        <end position="469"/>
    </location>
</feature>
<feature type="helix" evidence="9">
    <location>
        <begin position="473"/>
        <end position="475"/>
    </location>
</feature>
<feature type="strand" evidence="9">
    <location>
        <begin position="476"/>
        <end position="478"/>
    </location>
</feature>
<feature type="turn" evidence="4">
    <location>
        <begin position="479"/>
        <end position="481"/>
    </location>
</feature>
<feature type="strand" evidence="5">
    <location>
        <begin position="482"/>
        <end position="484"/>
    </location>
</feature>
<feature type="helix" evidence="9">
    <location>
        <begin position="487"/>
        <end position="497"/>
    </location>
</feature>
<feature type="turn" evidence="9">
    <location>
        <begin position="498"/>
        <end position="503"/>
    </location>
</feature>
<feature type="strand" evidence="6">
    <location>
        <begin position="504"/>
        <end position="506"/>
    </location>
</feature>
<feature type="strand" evidence="3">
    <location>
        <begin position="508"/>
        <end position="511"/>
    </location>
</feature>
<feature type="strand" evidence="9">
    <location>
        <begin position="515"/>
        <end position="518"/>
    </location>
</feature>
<feature type="strand" evidence="9">
    <location>
        <begin position="521"/>
        <end position="523"/>
    </location>
</feature>
<feature type="strand" evidence="9">
    <location>
        <begin position="526"/>
        <end position="529"/>
    </location>
</feature>
<feature type="helix" evidence="9">
    <location>
        <begin position="536"/>
        <end position="561"/>
    </location>
</feature>
<feature type="strand" evidence="3">
    <location>
        <begin position="562"/>
        <end position="565"/>
    </location>
</feature>
<feature type="helix" evidence="9">
    <location>
        <begin position="572"/>
        <end position="575"/>
    </location>
</feature>
<feature type="turn" evidence="3">
    <location>
        <begin position="586"/>
        <end position="588"/>
    </location>
</feature>
<feature type="helix" evidence="9">
    <location>
        <begin position="594"/>
        <end position="623"/>
    </location>
</feature>
<feature type="strand" evidence="8">
    <location>
        <begin position="626"/>
        <end position="628"/>
    </location>
</feature>
<feature type="strand" evidence="9">
    <location>
        <begin position="630"/>
        <end position="632"/>
    </location>
</feature>
<feature type="strand" evidence="9">
    <location>
        <begin position="635"/>
        <end position="638"/>
    </location>
</feature>
<feature type="turn" evidence="9">
    <location>
        <begin position="639"/>
        <end position="641"/>
    </location>
</feature>
<feature type="helix" evidence="9">
    <location>
        <begin position="642"/>
        <end position="645"/>
    </location>
</feature>
<feature type="strand" evidence="7">
    <location>
        <begin position="646"/>
        <end position="648"/>
    </location>
</feature>
<feature type="helix" evidence="9">
    <location>
        <begin position="649"/>
        <end position="655"/>
    </location>
</feature>
<feature type="helix" evidence="9">
    <location>
        <begin position="657"/>
        <end position="660"/>
    </location>
</feature>
<feature type="helix" evidence="9">
    <location>
        <begin position="662"/>
        <end position="665"/>
    </location>
</feature>
<feature type="strand" evidence="4">
    <location>
        <begin position="670"/>
        <end position="672"/>
    </location>
</feature>
<feature type="helix" evidence="9">
    <location>
        <begin position="673"/>
        <end position="694"/>
    </location>
</feature>
<feature type="helix" evidence="9">
    <location>
        <begin position="697"/>
        <end position="713"/>
    </location>
</feature>
<feature type="strand" evidence="9">
    <location>
        <begin position="719"/>
        <end position="721"/>
    </location>
</feature>
<feature type="helix" evidence="9">
    <location>
        <begin position="727"/>
        <end position="757"/>
    </location>
</feature>
<name>PSAA_PEA</name>
<sequence>MIIRSPEPKVQILADPEVKILVDRDPIKTSFEQWAKPGHFSRTIAKGPDTTTWIWNLHADAHDFDSHTSDLEEISRKVFSAHFGQLSIIFLWLSGMYFHGARFSNYEAWLNDPTHIGPSAQVVWPIVGQEILNGDVGGGFRGIQITSGFFQIWRASGITSELQLYCTAIGALVFAGLMLFAGWFHYHKAAPKLAWFQDVESMLNHHLAGLLGLGSLSWARHQVHVSLPINQFLNAGVDPKEIPLPHEFILNRDLLAQLYPSFAEGATPFFTLNWSKYADFLTFRGGLDPLTGGLWLTDIAHHHLAIAILFLIAGHMYRTNWGIGHGIKDILEAHKGPFTGQGHKGLYEILTTSWHAQLSINLAMLGSLTIVVAQHMYSMPPYPYLATDYATQLSLFTHHMWIGGFLIVGAAAHAAIFMVRDYDPTTRYNDLLDRVLRHRDAIISHLNWVCIFLGFHSFGLYIHNDTMSALGRPQDMFSDTAIQLQPVFAQWIQNTHALAPGTTAPGATASTSLTWGGGDLVAVGNKVALLPIPLGTADFLVHHIHAFTIHVTVLILLKGVLFARSSRLIPDKANLGFRFPCDGPGRGGTCQVSAWDHVFLGLFWMYNSISVVIFHFSWKMQSDVWGTINDQGVVTHITAGNFAQSSITINGWLRDFLWAQASQVIQSYGSSLSAYGLFFLGAHFVWAFSLMFLFSGRGYWQELIESIVWAHNKLKVAPATQPRALSIVQGRAVGVTHYLLGGIATTWAFFLARIIAVG</sequence>
<gene>
    <name evidence="1" type="primary">psaA</name>
    <name type="synonym">psaA1</name>
</gene>
<organism>
    <name type="scientific">Pisum sativum</name>
    <name type="common">Garden pea</name>
    <name type="synonym">Lathyrus oleraceus</name>
    <dbReference type="NCBI Taxonomy" id="3888"/>
    <lineage>
        <taxon>Eukaryota</taxon>
        <taxon>Viridiplantae</taxon>
        <taxon>Streptophyta</taxon>
        <taxon>Embryophyta</taxon>
        <taxon>Tracheophyta</taxon>
        <taxon>Spermatophyta</taxon>
        <taxon>Magnoliopsida</taxon>
        <taxon>eudicotyledons</taxon>
        <taxon>Gunneridae</taxon>
        <taxon>Pentapetalae</taxon>
        <taxon>rosids</taxon>
        <taxon>fabids</taxon>
        <taxon>Fabales</taxon>
        <taxon>Fabaceae</taxon>
        <taxon>Papilionoideae</taxon>
        <taxon>50 kb inversion clade</taxon>
        <taxon>NPAAA clade</taxon>
        <taxon>Hologalegina</taxon>
        <taxon>IRL clade</taxon>
        <taxon>Fabeae</taxon>
        <taxon>Pisum</taxon>
    </lineage>
</organism>
<dbReference type="EC" id="1.97.1.12" evidence="1"/>
<dbReference type="EMBL" id="X05423">
    <property type="protein sequence ID" value="CAA29003.1"/>
    <property type="molecule type" value="Genomic_DNA"/>
</dbReference>
<dbReference type="EMBL" id="AF223227">
    <property type="protein sequence ID" value="AAF65219.1"/>
    <property type="molecule type" value="Genomic_DNA"/>
</dbReference>
<dbReference type="PIR" id="S00703">
    <property type="entry name" value="S00703"/>
</dbReference>
<dbReference type="RefSeq" id="YP_003587538.1">
    <property type="nucleotide sequence ID" value="NC_014057.1"/>
</dbReference>
<dbReference type="PDB" id="2O01">
    <property type="method" value="X-ray"/>
    <property type="resolution" value="3.40 A"/>
    <property type="chains" value="A=5-758"/>
</dbReference>
<dbReference type="PDB" id="2WSC">
    <property type="method" value="X-ray"/>
    <property type="resolution" value="3.30 A"/>
    <property type="chains" value="A=1-758"/>
</dbReference>
<dbReference type="PDB" id="2WSE">
    <property type="method" value="X-ray"/>
    <property type="resolution" value="3.49 A"/>
    <property type="chains" value="A=1-758"/>
</dbReference>
<dbReference type="PDB" id="2WSF">
    <property type="method" value="X-ray"/>
    <property type="resolution" value="3.48 A"/>
    <property type="chains" value="A=1-758"/>
</dbReference>
<dbReference type="PDB" id="3LW5">
    <property type="method" value="X-ray"/>
    <property type="resolution" value="3.30 A"/>
    <property type="chains" value="A=21-758"/>
</dbReference>
<dbReference type="PDB" id="4RKU">
    <property type="method" value="X-ray"/>
    <property type="resolution" value="3.00 A"/>
    <property type="chains" value="A=38-758"/>
</dbReference>
<dbReference type="PDB" id="4XK8">
    <property type="method" value="X-ray"/>
    <property type="resolution" value="2.80 A"/>
    <property type="chains" value="A/a=17-758"/>
</dbReference>
<dbReference type="PDB" id="4Y28">
    <property type="method" value="X-ray"/>
    <property type="resolution" value="2.80 A"/>
    <property type="chains" value="A=1-758"/>
</dbReference>
<dbReference type="PDB" id="5L8R">
    <property type="method" value="X-ray"/>
    <property type="resolution" value="2.60 A"/>
    <property type="chains" value="A=1-758"/>
</dbReference>
<dbReference type="PDB" id="7DKZ">
    <property type="method" value="X-ray"/>
    <property type="resolution" value="2.39 A"/>
    <property type="chains" value="A=1-758"/>
</dbReference>
<dbReference type="PDBsum" id="2O01"/>
<dbReference type="PDBsum" id="2WSC"/>
<dbReference type="PDBsum" id="2WSE"/>
<dbReference type="PDBsum" id="2WSF"/>
<dbReference type="PDBsum" id="3LW5"/>
<dbReference type="PDBsum" id="4RKU"/>
<dbReference type="PDBsum" id="4XK8"/>
<dbReference type="PDBsum" id="4Y28"/>
<dbReference type="PDBsum" id="5L8R"/>
<dbReference type="PDBsum" id="7DKZ"/>
<dbReference type="SMR" id="P05310"/>
<dbReference type="DIP" id="DIP-60281N"/>
<dbReference type="IntAct" id="P05310">
    <property type="interactions" value="3"/>
</dbReference>
<dbReference type="GeneID" id="9073071"/>
<dbReference type="EvolutionaryTrace" id="P05310"/>
<dbReference type="GO" id="GO:0009535">
    <property type="term" value="C:chloroplast thylakoid membrane"/>
    <property type="evidence" value="ECO:0007669"/>
    <property type="project" value="UniProtKB-SubCell"/>
</dbReference>
<dbReference type="GO" id="GO:0009522">
    <property type="term" value="C:photosystem I"/>
    <property type="evidence" value="ECO:0007669"/>
    <property type="project" value="UniProtKB-KW"/>
</dbReference>
<dbReference type="GO" id="GO:0051539">
    <property type="term" value="F:4 iron, 4 sulfur cluster binding"/>
    <property type="evidence" value="ECO:0007669"/>
    <property type="project" value="UniProtKB-KW"/>
</dbReference>
<dbReference type="GO" id="GO:0016168">
    <property type="term" value="F:chlorophyll binding"/>
    <property type="evidence" value="ECO:0007669"/>
    <property type="project" value="UniProtKB-KW"/>
</dbReference>
<dbReference type="GO" id="GO:0009055">
    <property type="term" value="F:electron transfer activity"/>
    <property type="evidence" value="ECO:0007669"/>
    <property type="project" value="UniProtKB-UniRule"/>
</dbReference>
<dbReference type="GO" id="GO:0000287">
    <property type="term" value="F:magnesium ion binding"/>
    <property type="evidence" value="ECO:0007669"/>
    <property type="project" value="UniProtKB-UniRule"/>
</dbReference>
<dbReference type="GO" id="GO:0016491">
    <property type="term" value="F:oxidoreductase activity"/>
    <property type="evidence" value="ECO:0007669"/>
    <property type="project" value="UniProtKB-KW"/>
</dbReference>
<dbReference type="GO" id="GO:0015979">
    <property type="term" value="P:photosynthesis"/>
    <property type="evidence" value="ECO:0007669"/>
    <property type="project" value="UniProtKB-UniRule"/>
</dbReference>
<dbReference type="Gene3D" id="1.20.1130.10">
    <property type="entry name" value="Photosystem I PsaA/PsaB"/>
    <property type="match status" value="1"/>
</dbReference>
<dbReference type="HAMAP" id="MF_00458">
    <property type="entry name" value="PSI_PsaA"/>
    <property type="match status" value="1"/>
</dbReference>
<dbReference type="InterPro" id="IPR006243">
    <property type="entry name" value="PSI_PsaA"/>
</dbReference>
<dbReference type="InterPro" id="IPR001280">
    <property type="entry name" value="PSI_PsaA/B"/>
</dbReference>
<dbReference type="InterPro" id="IPR020586">
    <property type="entry name" value="PSI_PsaA/B_CS"/>
</dbReference>
<dbReference type="InterPro" id="IPR036408">
    <property type="entry name" value="PSI_PsaA/B_sf"/>
</dbReference>
<dbReference type="NCBIfam" id="TIGR01335">
    <property type="entry name" value="psaA"/>
    <property type="match status" value="1"/>
</dbReference>
<dbReference type="PANTHER" id="PTHR30128">
    <property type="entry name" value="OUTER MEMBRANE PROTEIN, OMPA-RELATED"/>
    <property type="match status" value="1"/>
</dbReference>
<dbReference type="PANTHER" id="PTHR30128:SF19">
    <property type="entry name" value="PHOTOSYSTEM I P700 CHLOROPHYLL A APOPROTEIN A1-RELATED"/>
    <property type="match status" value="1"/>
</dbReference>
<dbReference type="Pfam" id="PF00223">
    <property type="entry name" value="PsaA_PsaB"/>
    <property type="match status" value="1"/>
</dbReference>
<dbReference type="PIRSF" id="PIRSF002905">
    <property type="entry name" value="PSI_A"/>
    <property type="match status" value="1"/>
</dbReference>
<dbReference type="PRINTS" id="PR00257">
    <property type="entry name" value="PHOTSYSPSAAB"/>
</dbReference>
<dbReference type="SUPFAM" id="SSF81558">
    <property type="entry name" value="Photosystem I subunits PsaA/PsaB"/>
    <property type="match status" value="1"/>
</dbReference>
<dbReference type="PROSITE" id="PS00419">
    <property type="entry name" value="PHOTOSYSTEM_I_PSAAB"/>
    <property type="match status" value="1"/>
</dbReference>
<accession>P05310</accession>
<accession>Q9MUB9</accession>
<keyword id="KW-0002">3D-structure</keyword>
<keyword id="KW-0004">4Fe-4S</keyword>
<keyword id="KW-0148">Chlorophyll</keyword>
<keyword id="KW-0150">Chloroplast</keyword>
<keyword id="KW-0157">Chromophore</keyword>
<keyword id="KW-0249">Electron transport</keyword>
<keyword id="KW-0408">Iron</keyword>
<keyword id="KW-0411">Iron-sulfur</keyword>
<keyword id="KW-0460">Magnesium</keyword>
<keyword id="KW-0472">Membrane</keyword>
<keyword id="KW-0479">Metal-binding</keyword>
<keyword id="KW-0560">Oxidoreductase</keyword>
<keyword id="KW-0602">Photosynthesis</keyword>
<keyword id="KW-0603">Photosystem I</keyword>
<keyword id="KW-0934">Plastid</keyword>
<keyword id="KW-0793">Thylakoid</keyword>
<keyword id="KW-0812">Transmembrane</keyword>
<keyword id="KW-1133">Transmembrane helix</keyword>
<keyword id="KW-0813">Transport</keyword>
<reference key="1">
    <citation type="journal article" date="1986" name="Plant Mol. Biol.">
        <title>Sequence of two genes in pea chloroplast DNA coding for 84 and 82 kD polypeptides of the photosystem I complex.</title>
        <authorList>
            <person name="Lehmbeck J."/>
            <person name="Rasmussen O.F."/>
            <person name="Bookjans G.B."/>
            <person name="Jepsen B.R."/>
            <person name="Stummann B.M."/>
            <person name="Henningsen K.W."/>
        </authorList>
        <dbReference type="AGRICOLA" id="IND87003969"/>
    </citation>
    <scope>NUCLEOTIDE SEQUENCE [GENOMIC DNA]</scope>
</reference>
<reference key="2">
    <citation type="journal article" date="2000" name="Mol. Biol. Evol.">
        <title>Error, bias, and long-branch attraction in data for two chloroplast photosystem genes in seed plants.</title>
        <authorList>
            <person name="Sanderson M.J."/>
            <person name="Wojciechowski M.F."/>
            <person name="Hu J.-M."/>
            <person name="Sher Khan T."/>
            <person name="Brady S.G."/>
        </authorList>
    </citation>
    <scope>NUCLEOTIDE SEQUENCE [GENOMIC DNA] OF 19-737</scope>
    <source>
        <strain>cv. Wojciechowski 398</strain>
    </source>
</reference>
<geneLocation type="chloroplast"/>
<proteinExistence type="evidence at protein level"/>
<protein>
    <recommendedName>
        <fullName evidence="1">Photosystem I P700 chlorophyll a apoprotein A1</fullName>
        <ecNumber evidence="1">1.97.1.12</ecNumber>
    </recommendedName>
    <alternativeName>
        <fullName evidence="1">PSI-A</fullName>
    </alternativeName>
    <alternativeName>
        <fullName evidence="1">PsaA</fullName>
    </alternativeName>
</protein>